<proteinExistence type="inferred from homology"/>
<evidence type="ECO:0000255" key="1">
    <source>
        <dbReference type="HAMAP-Rule" id="MF_00082"/>
    </source>
</evidence>
<keyword id="KW-0028">Amino-acid biosynthesis</keyword>
<keyword id="KW-0055">Arginine biosynthesis</keyword>
<keyword id="KW-0067">ATP-binding</keyword>
<keyword id="KW-0963">Cytoplasm</keyword>
<keyword id="KW-0418">Kinase</keyword>
<keyword id="KW-0547">Nucleotide-binding</keyword>
<keyword id="KW-1185">Reference proteome</keyword>
<keyword id="KW-0808">Transferase</keyword>
<accession>Q8Y6U3</accession>
<gene>
    <name evidence="1" type="primary">argB</name>
    <name type="ordered locus">lmo1589</name>
</gene>
<organism>
    <name type="scientific">Listeria monocytogenes serovar 1/2a (strain ATCC BAA-679 / EGD-e)</name>
    <dbReference type="NCBI Taxonomy" id="169963"/>
    <lineage>
        <taxon>Bacteria</taxon>
        <taxon>Bacillati</taxon>
        <taxon>Bacillota</taxon>
        <taxon>Bacilli</taxon>
        <taxon>Bacillales</taxon>
        <taxon>Listeriaceae</taxon>
        <taxon>Listeria</taxon>
    </lineage>
</organism>
<name>ARGB_LISMO</name>
<dbReference type="EC" id="2.7.2.8" evidence="1"/>
<dbReference type="EMBL" id="AL591979">
    <property type="protein sequence ID" value="CAC99667.1"/>
    <property type="molecule type" value="Genomic_DNA"/>
</dbReference>
<dbReference type="PIR" id="AE1273">
    <property type="entry name" value="AE1273"/>
</dbReference>
<dbReference type="RefSeq" id="NP_465114.1">
    <property type="nucleotide sequence ID" value="NC_003210.1"/>
</dbReference>
<dbReference type="RefSeq" id="WP_010989753.1">
    <property type="nucleotide sequence ID" value="NZ_CP149495.1"/>
</dbReference>
<dbReference type="SMR" id="Q8Y6U3"/>
<dbReference type="STRING" id="169963.gene:17594246"/>
<dbReference type="PaxDb" id="169963-lmo1589"/>
<dbReference type="EnsemblBacteria" id="CAC99667">
    <property type="protein sequence ID" value="CAC99667"/>
    <property type="gene ID" value="CAC99667"/>
</dbReference>
<dbReference type="GeneID" id="987804"/>
<dbReference type="KEGG" id="lmo:lmo1589"/>
<dbReference type="PATRIC" id="fig|169963.11.peg.1631"/>
<dbReference type="eggNOG" id="COG0548">
    <property type="taxonomic scope" value="Bacteria"/>
</dbReference>
<dbReference type="HOGENOM" id="CLU_053680_1_0_9"/>
<dbReference type="OrthoDB" id="9803155at2"/>
<dbReference type="PhylomeDB" id="Q8Y6U3"/>
<dbReference type="BioCyc" id="LMON169963:LMO1589-MONOMER"/>
<dbReference type="UniPathway" id="UPA00068">
    <property type="reaction ID" value="UER00107"/>
</dbReference>
<dbReference type="Proteomes" id="UP000000817">
    <property type="component" value="Chromosome"/>
</dbReference>
<dbReference type="GO" id="GO:0005737">
    <property type="term" value="C:cytoplasm"/>
    <property type="evidence" value="ECO:0007669"/>
    <property type="project" value="UniProtKB-SubCell"/>
</dbReference>
<dbReference type="GO" id="GO:0003991">
    <property type="term" value="F:acetylglutamate kinase activity"/>
    <property type="evidence" value="ECO:0000318"/>
    <property type="project" value="GO_Central"/>
</dbReference>
<dbReference type="GO" id="GO:0005524">
    <property type="term" value="F:ATP binding"/>
    <property type="evidence" value="ECO:0007669"/>
    <property type="project" value="UniProtKB-UniRule"/>
</dbReference>
<dbReference type="GO" id="GO:0042450">
    <property type="term" value="P:arginine biosynthetic process via ornithine"/>
    <property type="evidence" value="ECO:0007669"/>
    <property type="project" value="UniProtKB-UniRule"/>
</dbReference>
<dbReference type="GO" id="GO:0006526">
    <property type="term" value="P:L-arginine biosynthetic process"/>
    <property type="evidence" value="ECO:0000318"/>
    <property type="project" value="GO_Central"/>
</dbReference>
<dbReference type="CDD" id="cd04238">
    <property type="entry name" value="AAK_NAGK-like"/>
    <property type="match status" value="1"/>
</dbReference>
<dbReference type="FunFam" id="3.40.1160.10:FF:000047">
    <property type="entry name" value="Acetylglutamate kinase"/>
    <property type="match status" value="1"/>
</dbReference>
<dbReference type="Gene3D" id="3.40.1160.10">
    <property type="entry name" value="Acetylglutamate kinase-like"/>
    <property type="match status" value="1"/>
</dbReference>
<dbReference type="HAMAP" id="MF_00082">
    <property type="entry name" value="ArgB"/>
    <property type="match status" value="1"/>
</dbReference>
<dbReference type="InterPro" id="IPR036393">
    <property type="entry name" value="AceGlu_kinase-like_sf"/>
</dbReference>
<dbReference type="InterPro" id="IPR004662">
    <property type="entry name" value="AcgluKinase_fam"/>
</dbReference>
<dbReference type="InterPro" id="IPR037528">
    <property type="entry name" value="ArgB"/>
</dbReference>
<dbReference type="InterPro" id="IPR001048">
    <property type="entry name" value="Asp/Glu/Uridylate_kinase"/>
</dbReference>
<dbReference type="NCBIfam" id="TIGR00761">
    <property type="entry name" value="argB"/>
    <property type="match status" value="1"/>
</dbReference>
<dbReference type="PANTHER" id="PTHR23342">
    <property type="entry name" value="N-ACETYLGLUTAMATE SYNTHASE"/>
    <property type="match status" value="1"/>
</dbReference>
<dbReference type="PANTHER" id="PTHR23342:SF0">
    <property type="entry name" value="N-ACETYLGLUTAMATE SYNTHASE, MITOCHONDRIAL"/>
    <property type="match status" value="1"/>
</dbReference>
<dbReference type="Pfam" id="PF00696">
    <property type="entry name" value="AA_kinase"/>
    <property type="match status" value="1"/>
</dbReference>
<dbReference type="PIRSF" id="PIRSF000728">
    <property type="entry name" value="NAGK"/>
    <property type="match status" value="1"/>
</dbReference>
<dbReference type="SUPFAM" id="SSF53633">
    <property type="entry name" value="Carbamate kinase-like"/>
    <property type="match status" value="1"/>
</dbReference>
<comment type="function">
    <text evidence="1">Catalyzes the ATP-dependent phosphorylation of N-acetyl-L-glutamate.</text>
</comment>
<comment type="catalytic activity">
    <reaction evidence="1">
        <text>N-acetyl-L-glutamate + ATP = N-acetyl-L-glutamyl 5-phosphate + ADP</text>
        <dbReference type="Rhea" id="RHEA:14629"/>
        <dbReference type="ChEBI" id="CHEBI:30616"/>
        <dbReference type="ChEBI" id="CHEBI:44337"/>
        <dbReference type="ChEBI" id="CHEBI:57936"/>
        <dbReference type="ChEBI" id="CHEBI:456216"/>
        <dbReference type="EC" id="2.7.2.8"/>
    </reaction>
</comment>
<comment type="pathway">
    <text evidence="1">Amino-acid biosynthesis; L-arginine biosynthesis; N(2)-acetyl-L-ornithine from L-glutamate: step 2/4.</text>
</comment>
<comment type="subcellular location">
    <subcellularLocation>
        <location evidence="1">Cytoplasm</location>
    </subcellularLocation>
</comment>
<comment type="similarity">
    <text evidence="1">Belongs to the acetylglutamate kinase family. ArgB subfamily.</text>
</comment>
<feature type="chain" id="PRO_0000112629" description="Acetylglutamate kinase">
    <location>
        <begin position="1"/>
        <end position="250"/>
    </location>
</feature>
<feature type="binding site" evidence="1">
    <location>
        <begin position="41"/>
        <end position="42"/>
    </location>
    <ligand>
        <name>substrate</name>
    </ligand>
</feature>
<feature type="binding site" evidence="1">
    <location>
        <position position="63"/>
    </location>
    <ligand>
        <name>substrate</name>
    </ligand>
</feature>
<feature type="binding site" evidence="1">
    <location>
        <position position="156"/>
    </location>
    <ligand>
        <name>substrate</name>
    </ligand>
</feature>
<feature type="site" description="Transition state stabilizer" evidence="1">
    <location>
        <position position="8"/>
    </location>
</feature>
<feature type="site" description="Transition state stabilizer" evidence="1">
    <location>
        <position position="215"/>
    </location>
</feature>
<sequence>MENTIVIKLGGVASDNLTEGFFRQITEWQAANKKIVLVHGGGHYITKMMEALAIPVETKNGLRVTNKATLEVTKMVLIGQVQPAITTAFQKRNISVIGLNASDTGLLEADRLSDTDLGLVGKITKVKTNLIEQLLSENIITVIAPLGINSEHDWLNVNADTAACEVASALHAEALYLLTDVPGVKNGSEIIGEIATAEIEKLQSTGVIKGGMIPKLASAAFAAENGVGQVIITDSLNNSGTKIKNKVAIG</sequence>
<reference key="1">
    <citation type="journal article" date="2001" name="Science">
        <title>Comparative genomics of Listeria species.</title>
        <authorList>
            <person name="Glaser P."/>
            <person name="Frangeul L."/>
            <person name="Buchrieser C."/>
            <person name="Rusniok C."/>
            <person name="Amend A."/>
            <person name="Baquero F."/>
            <person name="Berche P."/>
            <person name="Bloecker H."/>
            <person name="Brandt P."/>
            <person name="Chakraborty T."/>
            <person name="Charbit A."/>
            <person name="Chetouani F."/>
            <person name="Couve E."/>
            <person name="de Daruvar A."/>
            <person name="Dehoux P."/>
            <person name="Domann E."/>
            <person name="Dominguez-Bernal G."/>
            <person name="Duchaud E."/>
            <person name="Durant L."/>
            <person name="Dussurget O."/>
            <person name="Entian K.-D."/>
            <person name="Fsihi H."/>
            <person name="Garcia-del Portillo F."/>
            <person name="Garrido P."/>
            <person name="Gautier L."/>
            <person name="Goebel W."/>
            <person name="Gomez-Lopez N."/>
            <person name="Hain T."/>
            <person name="Hauf J."/>
            <person name="Jackson D."/>
            <person name="Jones L.-M."/>
            <person name="Kaerst U."/>
            <person name="Kreft J."/>
            <person name="Kuhn M."/>
            <person name="Kunst F."/>
            <person name="Kurapkat G."/>
            <person name="Madueno E."/>
            <person name="Maitournam A."/>
            <person name="Mata Vicente J."/>
            <person name="Ng E."/>
            <person name="Nedjari H."/>
            <person name="Nordsiek G."/>
            <person name="Novella S."/>
            <person name="de Pablos B."/>
            <person name="Perez-Diaz J.-C."/>
            <person name="Purcell R."/>
            <person name="Remmel B."/>
            <person name="Rose M."/>
            <person name="Schlueter T."/>
            <person name="Simoes N."/>
            <person name="Tierrez A."/>
            <person name="Vazquez-Boland J.-A."/>
            <person name="Voss H."/>
            <person name="Wehland J."/>
            <person name="Cossart P."/>
        </authorList>
    </citation>
    <scope>NUCLEOTIDE SEQUENCE [LARGE SCALE GENOMIC DNA]</scope>
    <source>
        <strain>ATCC BAA-679 / EGD-e</strain>
    </source>
</reference>
<protein>
    <recommendedName>
        <fullName evidence="1">Acetylglutamate kinase</fullName>
        <ecNumber evidence="1">2.7.2.8</ecNumber>
    </recommendedName>
    <alternativeName>
        <fullName evidence="1">N-acetyl-L-glutamate 5-phosphotransferase</fullName>
    </alternativeName>
    <alternativeName>
        <fullName evidence="1">NAG kinase</fullName>
        <shortName evidence="1">NAGK</shortName>
    </alternativeName>
</protein>